<comment type="function">
    <text evidence="3 4 5 6">Involved in the positive regulation of the TOR signaling pathway (PubMed:21216945, PubMed:25399018). Acts as a negative regulator of PP2A catalytic activity (PubMed:10517853, PubMed:21216945, PubMed:24357600). Plays a positive role in the ABA-regulated inhibition of germination, probably throught its interaction with ABI5 (PubMed:24357600).</text>
</comment>
<comment type="subunit">
    <text evidence="1 3 4 5 6">Interacts with the 36 kDa catalytic subunit (subunit C) of PP2A (PubMed:10517853). Interacts with PP2A1 and PP2A2 (PubMed:24357600). Interacts with PP2A3, PPX1 and FYPP1 (PubMed:21216945, PubMed:24357600). Interacts with FYPP3 and ABI5 (PubMed:24357600). Interacts with ATPK1/S6K1 and ATPK2/S6K2 (PubMed:25399018). Interacts with TIP41L (By similarity).</text>
</comment>
<comment type="tissue specificity">
    <text evidence="3 5">Ubiquitous (PubMed:10517853). Highly expressed in seed, and particularly in the embryo (PubMed:24357600).</text>
</comment>
<comment type="developmental stage">
    <text evidence="5">Highly expressed during seed maturation.</text>
</comment>
<comment type="induction">
    <text evidence="3 5">By chilling (PubMed:10517853). By abscisic acid (ABA) (PubMed:24357600).</text>
</comment>
<comment type="PTM">
    <text evidence="4">Phosphorylated by TOR kinase in vitro.</text>
</comment>
<comment type="disruption phenotype">
    <text evidence="4">RNAi plants show the formation of spontaneous disease-like nectrotic lesions leading to premature cell death. The defective plants also display a strong reduction in protein synthesis, the induction of autophagy and nitrogen mobilization.</text>
</comment>
<comment type="miscellaneous">
    <text evidence="5 6">Plants over-expressing TAP46 exhibit an increased abscisic acid (ABA) sensitivity in seed germination and a reduced PP2A activity (PubMed:24357600). Over-expression of TAP46 also leads to the stimulation of the overall plant growth and the increased nitrogen-assimilating activities (PubMed:25399018).</text>
</comment>
<comment type="similarity">
    <text evidence="8">Belongs to the IGBP1/TAP42 family.</text>
</comment>
<comment type="sequence caution" evidence="8">
    <conflict type="erroneous gene model prediction">
        <sequence resource="EMBL-CDS" id="BAA97140"/>
    </conflict>
</comment>
<keyword id="KW-0597">Phosphoprotein</keyword>
<keyword id="KW-1185">Reference proteome</keyword>
<reference key="1">
    <citation type="journal article" date="1999" name="Plant Physiol.">
        <title>The Arabidopsis homolog of yeast TAP42 and mammalian alpha4 binds to the catalytic subunit of protein phosphatase 2A and is induced by chilling.</title>
        <authorList>
            <person name="Harris D.M."/>
            <person name="Myrick T.L."/>
            <person name="Rundle S.J."/>
        </authorList>
    </citation>
    <scope>NUCLEOTIDE SEQUENCE [MRNA]</scope>
    <scope>FUNCTION</scope>
    <scope>TISSUE SPECIFICITY</scope>
    <scope>INDUCTION</scope>
    <scope>INTERACTION WITH PP2A</scope>
</reference>
<reference key="2">
    <citation type="journal article" date="2000" name="DNA Res.">
        <title>Structural analysis of Arabidopsis thaliana chromosome 5. X. Sequence features of the regions of 3,076,755 bp covered by sixty P1 and TAC clones.</title>
        <authorList>
            <person name="Sato S."/>
            <person name="Nakamura Y."/>
            <person name="Kaneko T."/>
            <person name="Katoh T."/>
            <person name="Asamizu E."/>
            <person name="Kotani H."/>
            <person name="Tabata S."/>
        </authorList>
    </citation>
    <scope>NUCLEOTIDE SEQUENCE [LARGE SCALE GENOMIC DNA]</scope>
    <source>
        <strain>cv. Columbia</strain>
    </source>
</reference>
<reference key="3">
    <citation type="journal article" date="2017" name="Plant J.">
        <title>Araport11: a complete reannotation of the Arabidopsis thaliana reference genome.</title>
        <authorList>
            <person name="Cheng C.Y."/>
            <person name="Krishnakumar V."/>
            <person name="Chan A.P."/>
            <person name="Thibaud-Nissen F."/>
            <person name="Schobel S."/>
            <person name="Town C.D."/>
        </authorList>
    </citation>
    <scope>GENOME REANNOTATION</scope>
    <source>
        <strain>cv. Columbia</strain>
    </source>
</reference>
<reference key="4">
    <citation type="journal article" date="2003" name="Science">
        <title>Empirical analysis of transcriptional activity in the Arabidopsis genome.</title>
        <authorList>
            <person name="Yamada K."/>
            <person name="Lim J."/>
            <person name="Dale J.M."/>
            <person name="Chen H."/>
            <person name="Shinn P."/>
            <person name="Palm C.J."/>
            <person name="Southwick A.M."/>
            <person name="Wu H.C."/>
            <person name="Kim C.J."/>
            <person name="Nguyen M."/>
            <person name="Pham P.K."/>
            <person name="Cheuk R.F."/>
            <person name="Karlin-Newmann G."/>
            <person name="Liu S.X."/>
            <person name="Lam B."/>
            <person name="Sakano H."/>
            <person name="Wu T."/>
            <person name="Yu G."/>
            <person name="Miranda M."/>
            <person name="Quach H.L."/>
            <person name="Tripp M."/>
            <person name="Chang C.H."/>
            <person name="Lee J.M."/>
            <person name="Toriumi M.J."/>
            <person name="Chan M.M."/>
            <person name="Tang C.C."/>
            <person name="Onodera C.S."/>
            <person name="Deng J.M."/>
            <person name="Akiyama K."/>
            <person name="Ansari Y."/>
            <person name="Arakawa T."/>
            <person name="Banh J."/>
            <person name="Banno F."/>
            <person name="Bowser L."/>
            <person name="Brooks S.Y."/>
            <person name="Carninci P."/>
            <person name="Chao Q."/>
            <person name="Choy N."/>
            <person name="Enju A."/>
            <person name="Goldsmith A.D."/>
            <person name="Gurjal M."/>
            <person name="Hansen N.F."/>
            <person name="Hayashizaki Y."/>
            <person name="Johnson-Hopson C."/>
            <person name="Hsuan V.W."/>
            <person name="Iida K."/>
            <person name="Karnes M."/>
            <person name="Khan S."/>
            <person name="Koesema E."/>
            <person name="Ishida J."/>
            <person name="Jiang P.X."/>
            <person name="Jones T."/>
            <person name="Kawai J."/>
            <person name="Kamiya A."/>
            <person name="Meyers C."/>
            <person name="Nakajima M."/>
            <person name="Narusaka M."/>
            <person name="Seki M."/>
            <person name="Sakurai T."/>
            <person name="Satou M."/>
            <person name="Tamse R."/>
            <person name="Vaysberg M."/>
            <person name="Wallender E.K."/>
            <person name="Wong C."/>
            <person name="Yamamura Y."/>
            <person name="Yuan S."/>
            <person name="Shinozaki K."/>
            <person name="Davis R.W."/>
            <person name="Theologis A."/>
            <person name="Ecker J.R."/>
        </authorList>
    </citation>
    <scope>NUCLEOTIDE SEQUENCE [LARGE SCALE MRNA]</scope>
    <source>
        <strain>cv. Columbia</strain>
    </source>
</reference>
<reference key="5">
    <citation type="submission" date="2002-03" db="EMBL/GenBank/DDBJ databases">
        <title>Full-length cDNA from Arabidopsis thaliana.</title>
        <authorList>
            <person name="Brover V.V."/>
            <person name="Troukhan M.E."/>
            <person name="Alexandrov N.A."/>
            <person name="Lu Y.-P."/>
            <person name="Flavell R.B."/>
            <person name="Feldmann K.A."/>
        </authorList>
    </citation>
    <scope>NUCLEOTIDE SEQUENCE [LARGE SCALE MRNA]</scope>
</reference>
<reference key="6">
    <citation type="journal article" date="2011" name="Plant Cell">
        <title>The PP2A regulatory subunit Tap46, a component of the TOR signaling pathway, modulates growth and metabolism in plants.</title>
        <authorList>
            <person name="Ahn C.S."/>
            <person name="Han J.-A."/>
            <person name="Lee H.-S."/>
            <person name="Lee S."/>
            <person name="Pai H.-S."/>
        </authorList>
    </citation>
    <scope>DISRUPTION PHENOTYPE</scope>
    <scope>INTERACTION WITH PP2A3; PPX1 AND FYPP1</scope>
    <scope>FUNCTION</scope>
    <scope>PHOSPHORYLATION</scope>
</reference>
<reference key="7">
    <citation type="journal article" date="2011" name="Plant Signal. Behav.">
        <title>Molecular functions of the PP2A regulatory subunit Tap46 in plants.</title>
        <authorList>
            <person name="Ahn C.S."/>
            <person name="Lee H.S."/>
            <person name="Pai H.S."/>
        </authorList>
    </citation>
    <scope>ADDENDUM</scope>
</reference>
<reference key="8">
    <citation type="journal article" date="2014" name="Plant Cell Environ.">
        <title>Protein phosphatases PP2A, PP4 and PP6: mediators and regulators in development and responses to environmental cues.</title>
        <authorList>
            <person name="Lillo C."/>
            <person name="Kataya A.R."/>
            <person name="Heidari B."/>
            <person name="Creighton M.T."/>
            <person name="Nemie-Feyissa D."/>
            <person name="Ginbot Z."/>
            <person name="Jonassen E.M."/>
        </authorList>
    </citation>
    <scope>REVIEW</scope>
</reference>
<reference key="9">
    <citation type="journal article" date="2014" name="Plant Physiol.">
        <title>TAP46 plays a positive role in the ABSCISIC ACID INSENSITIVE5-regulated gene expression in Arabidopsis.</title>
        <authorList>
            <person name="Hu R."/>
            <person name="Zhu Y."/>
            <person name="Shen G."/>
            <person name="Zhang H."/>
        </authorList>
    </citation>
    <scope>FUNCTION</scope>
    <scope>TISSUE SPECIFICITY</scope>
    <scope>INDUCTION BY ABA</scope>
    <scope>INTERACTION WITH PP2A1; PP2A2; PP2A3; PPX1; FYPP1; FYPP3 AND ABI5</scope>
    <scope>DEVELOPMENTAL STAGE</scope>
</reference>
<reference key="10">
    <citation type="journal article" date="2015" name="J. Exp. Bot.">
        <title>Overexpression of the PP2A regulatory subunit Tap46 leads to enhanced plant growth through stimulation of the TOR signalling pathway.</title>
        <authorList>
            <person name="Ahn C.S."/>
            <person name="Ahn H.K."/>
            <person name="Pai H.S."/>
        </authorList>
    </citation>
    <scope>FUNCTION</scope>
    <scope>INTERACTION WITH ATPK1 AND ATPK2</scope>
</reference>
<accession>Q8LDQ4</accession>
<accession>Q9LVV2</accession>
<accession>Q9XHD0</accession>
<sequence length="405" mass="45663">MGGLAMEEMPLSVLFEQARKIHLAASESGVDQDVVKKGCEMFQKCEDMIGKLALFSSNETKEDISTNNLKYLLVPYYLAELTEKIIQEDRIQIVKASYAKLKEFFSFCEAMELVPDEELEASSRGGSGAPADRRALKIARFKRQKAAEAKLLEIKERKERRGRSTKASALSTPVESGEDDIPDDDSEEEREAWLSSINLAICKAIDLLEMLKREEEMLSAIKERQLKDGEGGFSRDALDDRTKKAETWHRDAAARIQYSKPAQPITCATFAQDVLEGRASVSQGHEHKNQPLIFGPASIVGGPLSTERERMIAQVFQPSHRMPTMCIEDAGLTEMNIMNDWQEQTKKAIEEATTSWYNDKPLRRKEEDEEDDDEDEEAVMKARAFDDWKDDNPRGAGNKKLTPCG</sequence>
<dbReference type="EMBL" id="AF133708">
    <property type="protein sequence ID" value="AAD39930.1"/>
    <property type="molecule type" value="mRNA"/>
</dbReference>
<dbReference type="EMBL" id="AB018116">
    <property type="protein sequence ID" value="BAA97140.1"/>
    <property type="status" value="ALT_SEQ"/>
    <property type="molecule type" value="Genomic_DNA"/>
</dbReference>
<dbReference type="EMBL" id="CP002688">
    <property type="protein sequence ID" value="AED96288.1"/>
    <property type="molecule type" value="Genomic_DNA"/>
</dbReference>
<dbReference type="EMBL" id="BT004072">
    <property type="protein sequence ID" value="AAO42099.1"/>
    <property type="molecule type" value="mRNA"/>
</dbReference>
<dbReference type="EMBL" id="BT006150">
    <property type="protein sequence ID" value="AAP04135.1"/>
    <property type="molecule type" value="mRNA"/>
</dbReference>
<dbReference type="EMBL" id="AY085863">
    <property type="protein sequence ID" value="AAM63076.1"/>
    <property type="molecule type" value="mRNA"/>
</dbReference>
<dbReference type="PIR" id="T52307">
    <property type="entry name" value="T52307"/>
</dbReference>
<dbReference type="RefSeq" id="NP_568783.1">
    <property type="nucleotide sequence ID" value="NM_124679.3"/>
</dbReference>
<dbReference type="SMR" id="Q8LDQ4"/>
<dbReference type="BioGRID" id="20624">
    <property type="interactions" value="38"/>
</dbReference>
<dbReference type="FunCoup" id="Q8LDQ4">
    <property type="interactions" value="4009"/>
</dbReference>
<dbReference type="IntAct" id="Q8LDQ4">
    <property type="interactions" value="34"/>
</dbReference>
<dbReference type="STRING" id="3702.Q8LDQ4"/>
<dbReference type="PaxDb" id="3702-AT5G53000.1"/>
<dbReference type="ProteomicsDB" id="234181"/>
<dbReference type="EnsemblPlants" id="AT5G53000.1">
    <property type="protein sequence ID" value="AT5G53000.1"/>
    <property type="gene ID" value="AT5G53000"/>
</dbReference>
<dbReference type="GeneID" id="835379"/>
<dbReference type="Gramene" id="AT5G53000.1">
    <property type="protein sequence ID" value="AT5G53000.1"/>
    <property type="gene ID" value="AT5G53000"/>
</dbReference>
<dbReference type="KEGG" id="ath:AT5G53000"/>
<dbReference type="Araport" id="AT5G53000"/>
<dbReference type="TAIR" id="AT5G53000">
    <property type="gene designation" value="TAP46"/>
</dbReference>
<dbReference type="eggNOG" id="KOG2830">
    <property type="taxonomic scope" value="Eukaryota"/>
</dbReference>
<dbReference type="HOGENOM" id="CLU_041824_0_0_1"/>
<dbReference type="InParanoid" id="Q8LDQ4"/>
<dbReference type="OMA" id="EYELCEA"/>
<dbReference type="OrthoDB" id="10261753at2759"/>
<dbReference type="PhylomeDB" id="Q8LDQ4"/>
<dbReference type="PRO" id="PR:Q8LDQ4"/>
<dbReference type="Proteomes" id="UP000006548">
    <property type="component" value="Chromosome 5"/>
</dbReference>
<dbReference type="ExpressionAtlas" id="Q8LDQ4">
    <property type="expression patterns" value="baseline and differential"/>
</dbReference>
<dbReference type="GO" id="GO:0005829">
    <property type="term" value="C:cytosol"/>
    <property type="evidence" value="ECO:0007005"/>
    <property type="project" value="TAIR"/>
</dbReference>
<dbReference type="GO" id="GO:0019900">
    <property type="term" value="F:kinase binding"/>
    <property type="evidence" value="ECO:0000353"/>
    <property type="project" value="UniProtKB"/>
</dbReference>
<dbReference type="GO" id="GO:0019903">
    <property type="term" value="F:protein phosphatase binding"/>
    <property type="evidence" value="ECO:0000353"/>
    <property type="project" value="UniProtKB"/>
</dbReference>
<dbReference type="GO" id="GO:0010187">
    <property type="term" value="P:negative regulation of seed germination"/>
    <property type="evidence" value="ECO:0000315"/>
    <property type="project" value="UniProtKB"/>
</dbReference>
<dbReference type="GO" id="GO:0030307">
    <property type="term" value="P:positive regulation of cell growth"/>
    <property type="evidence" value="ECO:0000315"/>
    <property type="project" value="UniProtKB"/>
</dbReference>
<dbReference type="GO" id="GO:0032008">
    <property type="term" value="P:positive regulation of TOR signaling"/>
    <property type="evidence" value="ECO:0000315"/>
    <property type="project" value="UniProtKB"/>
</dbReference>
<dbReference type="GO" id="GO:0006808">
    <property type="term" value="P:regulation of nitrogen utilization"/>
    <property type="evidence" value="ECO:0000315"/>
    <property type="project" value="UniProtKB"/>
</dbReference>
<dbReference type="GO" id="GO:0009737">
    <property type="term" value="P:response to abscisic acid"/>
    <property type="evidence" value="ECO:0000314"/>
    <property type="project" value="UniProtKB"/>
</dbReference>
<dbReference type="GO" id="GO:0009409">
    <property type="term" value="P:response to cold"/>
    <property type="evidence" value="ECO:0000270"/>
    <property type="project" value="TAIR"/>
</dbReference>
<dbReference type="GO" id="GO:0031929">
    <property type="term" value="P:TOR signaling"/>
    <property type="evidence" value="ECO:0000315"/>
    <property type="project" value="UniProtKB"/>
</dbReference>
<dbReference type="FunFam" id="1.25.40.540:FF:000002">
    <property type="entry name" value="PP2A regulatory subunit TAP46"/>
    <property type="match status" value="1"/>
</dbReference>
<dbReference type="Gene3D" id="1.25.40.540">
    <property type="entry name" value="TAP42-like family"/>
    <property type="match status" value="1"/>
</dbReference>
<dbReference type="InterPro" id="IPR038511">
    <property type="entry name" value="TAP42/TAP46-like_sf"/>
</dbReference>
<dbReference type="InterPro" id="IPR007304">
    <property type="entry name" value="TAP46-like"/>
</dbReference>
<dbReference type="PANTHER" id="PTHR10933">
    <property type="entry name" value="IMMUNOGLOBULIN-BINDING PROTEIN 1"/>
    <property type="match status" value="1"/>
</dbReference>
<dbReference type="PANTHER" id="PTHR10933:SF9">
    <property type="entry name" value="IMMUNOGLOBULIN-BINDING PROTEIN 1"/>
    <property type="match status" value="1"/>
</dbReference>
<dbReference type="Pfam" id="PF04177">
    <property type="entry name" value="TAP42"/>
    <property type="match status" value="1"/>
</dbReference>
<evidence type="ECO:0000250" key="1">
    <source>
        <dbReference type="UniProtKB" id="Q04372"/>
    </source>
</evidence>
<evidence type="ECO:0000256" key="2">
    <source>
        <dbReference type="SAM" id="MobiDB-lite"/>
    </source>
</evidence>
<evidence type="ECO:0000269" key="3">
    <source>
    </source>
</evidence>
<evidence type="ECO:0000269" key="4">
    <source>
    </source>
</evidence>
<evidence type="ECO:0000269" key="5">
    <source>
    </source>
</evidence>
<evidence type="ECO:0000269" key="6">
    <source>
    </source>
</evidence>
<evidence type="ECO:0000303" key="7">
    <source>
    </source>
</evidence>
<evidence type="ECO:0000305" key="8"/>
<evidence type="ECO:0000312" key="9">
    <source>
        <dbReference type="Araport" id="AT5G53000"/>
    </source>
</evidence>
<evidence type="ECO:0000312" key="10">
    <source>
        <dbReference type="EMBL" id="BAA97140.1"/>
    </source>
</evidence>
<proteinExistence type="evidence at protein level"/>
<gene>
    <name evidence="7" type="primary">TAP46</name>
    <name evidence="9" type="ordered locus">At5g53000</name>
    <name evidence="10" type="ORF">MNB8.6</name>
</gene>
<name>TAP46_ARATH</name>
<organism>
    <name type="scientific">Arabidopsis thaliana</name>
    <name type="common">Mouse-ear cress</name>
    <dbReference type="NCBI Taxonomy" id="3702"/>
    <lineage>
        <taxon>Eukaryota</taxon>
        <taxon>Viridiplantae</taxon>
        <taxon>Streptophyta</taxon>
        <taxon>Embryophyta</taxon>
        <taxon>Tracheophyta</taxon>
        <taxon>Spermatophyta</taxon>
        <taxon>Magnoliopsida</taxon>
        <taxon>eudicotyledons</taxon>
        <taxon>Gunneridae</taxon>
        <taxon>Pentapetalae</taxon>
        <taxon>rosids</taxon>
        <taxon>malvids</taxon>
        <taxon>Brassicales</taxon>
        <taxon>Brassicaceae</taxon>
        <taxon>Camelineae</taxon>
        <taxon>Arabidopsis</taxon>
    </lineage>
</organism>
<protein>
    <recommendedName>
        <fullName evidence="7">PP2A regulatory subunit TAP46</fullName>
    </recommendedName>
    <alternativeName>
        <fullName evidence="8">2A phosphatase-associated protein of 46 kDa</fullName>
    </alternativeName>
</protein>
<feature type="chain" id="PRO_0000218622" description="PP2A regulatory subunit TAP46">
    <location>
        <begin position="1"/>
        <end position="405"/>
    </location>
</feature>
<feature type="region of interest" description="Disordered" evidence="2">
    <location>
        <begin position="159"/>
        <end position="189"/>
    </location>
</feature>
<feature type="region of interest" description="Disordered" evidence="2">
    <location>
        <begin position="352"/>
        <end position="405"/>
    </location>
</feature>
<feature type="compositionally biased region" description="Polar residues" evidence="2">
    <location>
        <begin position="165"/>
        <end position="174"/>
    </location>
</feature>
<feature type="compositionally biased region" description="Acidic residues" evidence="2">
    <location>
        <begin position="176"/>
        <end position="189"/>
    </location>
</feature>
<feature type="compositionally biased region" description="Acidic residues" evidence="2">
    <location>
        <begin position="367"/>
        <end position="377"/>
    </location>
</feature>
<feature type="compositionally biased region" description="Basic and acidic residues" evidence="2">
    <location>
        <begin position="378"/>
        <end position="393"/>
    </location>
</feature>
<feature type="sequence conflict" description="In Ref. 5; AAM63076." evidence="8" ref="5">
    <original>EEA</original>
    <variation>DEP</variation>
    <location>
        <begin position="376"/>
        <end position="378"/>
    </location>
</feature>